<name>MRAY_HELHP</name>
<feature type="chain" id="PRO_0000108835" description="Phospho-N-acetylmuramoyl-pentapeptide-transferase">
    <location>
        <begin position="1"/>
        <end position="359"/>
    </location>
</feature>
<feature type="transmembrane region" description="Helical" evidence="1">
    <location>
        <begin position="23"/>
        <end position="43"/>
    </location>
</feature>
<feature type="transmembrane region" description="Helical" evidence="1">
    <location>
        <begin position="68"/>
        <end position="88"/>
    </location>
</feature>
<feature type="transmembrane region" description="Helical" evidence="1">
    <location>
        <begin position="92"/>
        <end position="112"/>
    </location>
</feature>
<feature type="transmembrane region" description="Helical" evidence="1">
    <location>
        <begin position="126"/>
        <end position="146"/>
    </location>
</feature>
<feature type="transmembrane region" description="Helical" evidence="1">
    <location>
        <begin position="165"/>
        <end position="185"/>
    </location>
</feature>
<feature type="transmembrane region" description="Helical" evidence="1">
    <location>
        <begin position="198"/>
        <end position="218"/>
    </location>
</feature>
<feature type="transmembrane region" description="Helical" evidence="1">
    <location>
        <begin position="235"/>
        <end position="255"/>
    </location>
</feature>
<feature type="transmembrane region" description="Helical" evidence="1">
    <location>
        <begin position="262"/>
        <end position="282"/>
    </location>
</feature>
<feature type="transmembrane region" description="Helical" evidence="1">
    <location>
        <begin position="287"/>
        <end position="307"/>
    </location>
</feature>
<feature type="transmembrane region" description="Helical" evidence="1">
    <location>
        <begin position="336"/>
        <end position="356"/>
    </location>
</feature>
<accession>Q7VGZ9</accession>
<dbReference type="EC" id="2.7.8.13" evidence="1"/>
<dbReference type="EMBL" id="AE017125">
    <property type="protein sequence ID" value="AAP77765.1"/>
    <property type="molecule type" value="Genomic_DNA"/>
</dbReference>
<dbReference type="RefSeq" id="WP_011116008.1">
    <property type="nucleotide sequence ID" value="NC_004917.1"/>
</dbReference>
<dbReference type="SMR" id="Q7VGZ9"/>
<dbReference type="STRING" id="235279.HH_1168"/>
<dbReference type="KEGG" id="hhe:HH_1168"/>
<dbReference type="eggNOG" id="COG0472">
    <property type="taxonomic scope" value="Bacteria"/>
</dbReference>
<dbReference type="HOGENOM" id="CLU_023982_0_0_7"/>
<dbReference type="OrthoDB" id="9805475at2"/>
<dbReference type="UniPathway" id="UPA00219"/>
<dbReference type="Proteomes" id="UP000002495">
    <property type="component" value="Chromosome"/>
</dbReference>
<dbReference type="GO" id="GO:0005886">
    <property type="term" value="C:plasma membrane"/>
    <property type="evidence" value="ECO:0007669"/>
    <property type="project" value="UniProtKB-SubCell"/>
</dbReference>
<dbReference type="GO" id="GO:0046872">
    <property type="term" value="F:metal ion binding"/>
    <property type="evidence" value="ECO:0007669"/>
    <property type="project" value="UniProtKB-KW"/>
</dbReference>
<dbReference type="GO" id="GO:0008963">
    <property type="term" value="F:phospho-N-acetylmuramoyl-pentapeptide-transferase activity"/>
    <property type="evidence" value="ECO:0007669"/>
    <property type="project" value="UniProtKB-UniRule"/>
</dbReference>
<dbReference type="GO" id="GO:0051992">
    <property type="term" value="F:UDP-N-acetylmuramoyl-L-alanyl-D-glutamyl-meso-2,6-diaminopimelyl-D-alanyl-D-alanine:undecaprenyl-phosphate transferase activity"/>
    <property type="evidence" value="ECO:0007669"/>
    <property type="project" value="RHEA"/>
</dbReference>
<dbReference type="GO" id="GO:0051301">
    <property type="term" value="P:cell division"/>
    <property type="evidence" value="ECO:0007669"/>
    <property type="project" value="UniProtKB-KW"/>
</dbReference>
<dbReference type="GO" id="GO:0071555">
    <property type="term" value="P:cell wall organization"/>
    <property type="evidence" value="ECO:0007669"/>
    <property type="project" value="UniProtKB-KW"/>
</dbReference>
<dbReference type="GO" id="GO:0009252">
    <property type="term" value="P:peptidoglycan biosynthetic process"/>
    <property type="evidence" value="ECO:0007669"/>
    <property type="project" value="UniProtKB-UniRule"/>
</dbReference>
<dbReference type="GO" id="GO:0008360">
    <property type="term" value="P:regulation of cell shape"/>
    <property type="evidence" value="ECO:0007669"/>
    <property type="project" value="UniProtKB-KW"/>
</dbReference>
<dbReference type="CDD" id="cd06852">
    <property type="entry name" value="GT_MraY"/>
    <property type="match status" value="1"/>
</dbReference>
<dbReference type="HAMAP" id="MF_00038">
    <property type="entry name" value="MraY"/>
    <property type="match status" value="1"/>
</dbReference>
<dbReference type="InterPro" id="IPR000715">
    <property type="entry name" value="Glycosyl_transferase_4"/>
</dbReference>
<dbReference type="InterPro" id="IPR003524">
    <property type="entry name" value="PNAcMuramoyl-5peptid_Trfase"/>
</dbReference>
<dbReference type="InterPro" id="IPR018480">
    <property type="entry name" value="PNAcMuramoyl-5peptid_Trfase_CS"/>
</dbReference>
<dbReference type="NCBIfam" id="TIGR00445">
    <property type="entry name" value="mraY"/>
    <property type="match status" value="1"/>
</dbReference>
<dbReference type="PANTHER" id="PTHR22926">
    <property type="entry name" value="PHOSPHO-N-ACETYLMURAMOYL-PENTAPEPTIDE-TRANSFERASE"/>
    <property type="match status" value="1"/>
</dbReference>
<dbReference type="PANTHER" id="PTHR22926:SF5">
    <property type="entry name" value="PHOSPHO-N-ACETYLMURAMOYL-PENTAPEPTIDE-TRANSFERASE HOMOLOG"/>
    <property type="match status" value="1"/>
</dbReference>
<dbReference type="Pfam" id="PF00953">
    <property type="entry name" value="Glycos_transf_4"/>
    <property type="match status" value="1"/>
</dbReference>
<dbReference type="Pfam" id="PF10555">
    <property type="entry name" value="MraY_sig1"/>
    <property type="match status" value="1"/>
</dbReference>
<dbReference type="PROSITE" id="PS01347">
    <property type="entry name" value="MRAY_1"/>
    <property type="match status" value="1"/>
</dbReference>
<dbReference type="PROSITE" id="PS01348">
    <property type="entry name" value="MRAY_2"/>
    <property type="match status" value="1"/>
</dbReference>
<gene>
    <name evidence="1" type="primary">mraY</name>
    <name type="ordered locus">HH_1168</name>
</gene>
<proteinExistence type="inferred from homology"/>
<reference key="1">
    <citation type="journal article" date="2003" name="Proc. Natl. Acad. Sci. U.S.A.">
        <title>The complete genome sequence of the carcinogenic bacterium Helicobacter hepaticus.</title>
        <authorList>
            <person name="Suerbaum S."/>
            <person name="Josenhans C."/>
            <person name="Sterzenbach T."/>
            <person name="Drescher B."/>
            <person name="Brandt P."/>
            <person name="Bell M."/>
            <person name="Droege M."/>
            <person name="Fartmann B."/>
            <person name="Fischer H.-P."/>
            <person name="Ge Z."/>
            <person name="Hoerster A."/>
            <person name="Holland R."/>
            <person name="Klein K."/>
            <person name="Koenig J."/>
            <person name="Macko L."/>
            <person name="Mendz G.L."/>
            <person name="Nyakatura G."/>
            <person name="Schauer D.B."/>
            <person name="Shen Z."/>
            <person name="Weber J."/>
            <person name="Frosch M."/>
            <person name="Fox J.G."/>
        </authorList>
    </citation>
    <scope>NUCLEOTIDE SEQUENCE [LARGE SCALE GENOMIC DNA]</scope>
    <source>
        <strain>ATCC 51449 / 3B1</strain>
    </source>
</reference>
<comment type="function">
    <text evidence="1">Catalyzes the initial step of the lipid cycle reactions in the biosynthesis of the cell wall peptidoglycan: transfers peptidoglycan precursor phospho-MurNAc-pentapeptide from UDP-MurNAc-pentapeptide onto the lipid carrier undecaprenyl phosphate, yielding undecaprenyl-pyrophosphoryl-MurNAc-pentapeptide, known as lipid I.</text>
</comment>
<comment type="catalytic activity">
    <reaction evidence="1">
        <text>UDP-N-acetyl-alpha-D-muramoyl-L-alanyl-gamma-D-glutamyl-meso-2,6-diaminopimeloyl-D-alanyl-D-alanine + di-trans,octa-cis-undecaprenyl phosphate = di-trans,octa-cis-undecaprenyl diphospho-N-acetyl-alpha-D-muramoyl-L-alanyl-D-glutamyl-meso-2,6-diaminopimeloyl-D-alanyl-D-alanine + UMP</text>
        <dbReference type="Rhea" id="RHEA:28386"/>
        <dbReference type="ChEBI" id="CHEBI:57865"/>
        <dbReference type="ChEBI" id="CHEBI:60392"/>
        <dbReference type="ChEBI" id="CHEBI:61386"/>
        <dbReference type="ChEBI" id="CHEBI:61387"/>
        <dbReference type="EC" id="2.7.8.13"/>
    </reaction>
</comment>
<comment type="cofactor">
    <cofactor evidence="1">
        <name>Mg(2+)</name>
        <dbReference type="ChEBI" id="CHEBI:18420"/>
    </cofactor>
</comment>
<comment type="pathway">
    <text evidence="1">Cell wall biogenesis; peptidoglycan biosynthesis.</text>
</comment>
<comment type="subcellular location">
    <subcellularLocation>
        <location evidence="1">Cell inner membrane</location>
        <topology evidence="1">Multi-pass membrane protein</topology>
    </subcellularLocation>
</comment>
<comment type="similarity">
    <text evidence="1">Belongs to the glycosyltransferase 4 family. MraY subfamily.</text>
</comment>
<evidence type="ECO:0000255" key="1">
    <source>
        <dbReference type="HAMAP-Rule" id="MF_00038"/>
    </source>
</evidence>
<organism>
    <name type="scientific">Helicobacter hepaticus (strain ATCC 51449 / 3B1)</name>
    <dbReference type="NCBI Taxonomy" id="235279"/>
    <lineage>
        <taxon>Bacteria</taxon>
        <taxon>Pseudomonadati</taxon>
        <taxon>Campylobacterota</taxon>
        <taxon>Epsilonproteobacteria</taxon>
        <taxon>Campylobacterales</taxon>
        <taxon>Helicobacteraceae</taxon>
        <taxon>Helicobacter</taxon>
    </lineage>
</organism>
<protein>
    <recommendedName>
        <fullName evidence="1">Phospho-N-acetylmuramoyl-pentapeptide-transferase</fullName>
        <ecNumber evidence="1">2.7.8.13</ecNumber>
    </recommendedName>
    <alternativeName>
        <fullName evidence="1">UDP-MurNAc-pentapeptide phosphotransferase</fullName>
    </alternativeName>
</protein>
<keyword id="KW-0131">Cell cycle</keyword>
<keyword id="KW-0132">Cell division</keyword>
<keyword id="KW-0997">Cell inner membrane</keyword>
<keyword id="KW-1003">Cell membrane</keyword>
<keyword id="KW-0133">Cell shape</keyword>
<keyword id="KW-0961">Cell wall biogenesis/degradation</keyword>
<keyword id="KW-0460">Magnesium</keyword>
<keyword id="KW-0472">Membrane</keyword>
<keyword id="KW-0479">Metal-binding</keyword>
<keyword id="KW-0573">Peptidoglycan synthesis</keyword>
<keyword id="KW-1185">Reference proteome</keyword>
<keyword id="KW-0808">Transferase</keyword>
<keyword id="KW-0812">Transmembrane</keyword>
<keyword id="KW-1133">Transmembrane helix</keyword>
<sequence>MLYWLYQYYGVNIFSYITFRAGVAFFVAFGLSVFFMPYFIKWAKAKKANQPISTYVAAHEGKKNTPTMGGIVFIISMICASLLCGNLFNPYVLLGLFCISCFALIGARDDYMKISAKNNAGMSAKMKFFLLFIVSLIITSILLYIGHNTNFYIPFMKYPLFDMGAFKIMDISVLALGFWVLVFLATSNAVNITDGLDGLATMPSICALFSLSAFVYVAGHAGFSSYLLYPKVVDSGELVILSVALIGALFGFLWYNCHPAQVFMGDSGSLALGAFIAFMAIVSNNEILLLLIGIIFVIEALSVILQVGSYKYRKKRIFAMAPIHHHFEVQGWAENKIIVRFWIIAILANIIALLSLKIR</sequence>